<gene>
    <name type="primary">leprot</name>
    <name type="synonym">lepr-grp</name>
    <name type="ORF">zgc:112430</name>
</gene>
<sequence length="130" mass="14130">MAGIKALVALSFSGALGLTFLLLGCALEQFGQYWPMFVLIFYILSPIPNLIARRHADDTESSNACRELAYFLTTGIVVSAYGLPVVLARKAVIQWGAAGLVMAGNCVIFLTILGFFLIFGGGDDFSWEQW</sequence>
<organism>
    <name type="scientific">Danio rerio</name>
    <name type="common">Zebrafish</name>
    <name type="synonym">Brachydanio rerio</name>
    <dbReference type="NCBI Taxonomy" id="7955"/>
    <lineage>
        <taxon>Eukaryota</taxon>
        <taxon>Metazoa</taxon>
        <taxon>Chordata</taxon>
        <taxon>Craniata</taxon>
        <taxon>Vertebrata</taxon>
        <taxon>Euteleostomi</taxon>
        <taxon>Actinopterygii</taxon>
        <taxon>Neopterygii</taxon>
        <taxon>Teleostei</taxon>
        <taxon>Ostariophysi</taxon>
        <taxon>Cypriniformes</taxon>
        <taxon>Danionidae</taxon>
        <taxon>Danioninae</taxon>
        <taxon>Danio</taxon>
    </lineage>
</organism>
<keyword id="KW-0967">Endosome</keyword>
<keyword id="KW-0333">Golgi apparatus</keyword>
<keyword id="KW-0472">Membrane</keyword>
<keyword id="KW-1185">Reference proteome</keyword>
<keyword id="KW-0812">Transmembrane</keyword>
<keyword id="KW-1133">Transmembrane helix</keyword>
<reference key="1">
    <citation type="submission" date="2005-04" db="EMBL/GenBank/DDBJ databases">
        <authorList>
            <consortium name="NIH - Zebrafish Gene Collection (ZGC) project"/>
        </authorList>
    </citation>
    <scope>NUCLEOTIDE SEQUENCE [LARGE SCALE MRNA]</scope>
    <source>
        <tissue>Olfactory epithelium</tissue>
    </source>
</reference>
<evidence type="ECO:0000250" key="1"/>
<evidence type="ECO:0000255" key="2"/>
<evidence type="ECO:0000305" key="3"/>
<protein>
    <recommendedName>
        <fullName>Leptin receptor gene-related protein</fullName>
    </recommendedName>
    <alternativeName>
        <fullName>Endospanin-1</fullName>
    </alternativeName>
    <alternativeName>
        <fullName>OB-R gene-related protein</fullName>
        <shortName>OB-RGRP</shortName>
    </alternativeName>
</protein>
<accession>Q561T9</accession>
<dbReference type="EMBL" id="BC093304">
    <property type="protein sequence ID" value="AAH93304.1"/>
    <property type="molecule type" value="mRNA"/>
</dbReference>
<dbReference type="RefSeq" id="NP_001017787.1">
    <property type="nucleotide sequence ID" value="NM_001017787.1"/>
</dbReference>
<dbReference type="FunCoup" id="Q561T9">
    <property type="interactions" value="1830"/>
</dbReference>
<dbReference type="STRING" id="7955.ENSDARP00000152054"/>
<dbReference type="PaxDb" id="7955-ENSDARP00000103077"/>
<dbReference type="GeneID" id="550484"/>
<dbReference type="KEGG" id="dre:550484"/>
<dbReference type="AGR" id="ZFIN:ZDB-GENE-050417-314"/>
<dbReference type="CTD" id="54741"/>
<dbReference type="ZFIN" id="ZDB-GENE-050417-314">
    <property type="gene designation" value="leprot"/>
</dbReference>
<dbReference type="eggNOG" id="KOG2174">
    <property type="taxonomic scope" value="Eukaryota"/>
</dbReference>
<dbReference type="InParanoid" id="Q561T9"/>
<dbReference type="OrthoDB" id="14246at2759"/>
<dbReference type="PhylomeDB" id="Q561T9"/>
<dbReference type="PRO" id="PR:Q561T9"/>
<dbReference type="Proteomes" id="UP000000437">
    <property type="component" value="Chromosome 2"/>
</dbReference>
<dbReference type="GO" id="GO:0005768">
    <property type="term" value="C:endosome"/>
    <property type="evidence" value="ECO:0000318"/>
    <property type="project" value="GO_Central"/>
</dbReference>
<dbReference type="GO" id="GO:0010008">
    <property type="term" value="C:endosome membrane"/>
    <property type="evidence" value="ECO:0007669"/>
    <property type="project" value="UniProtKB-SubCell"/>
</dbReference>
<dbReference type="GO" id="GO:0000139">
    <property type="term" value="C:Golgi membrane"/>
    <property type="evidence" value="ECO:0007669"/>
    <property type="project" value="UniProtKB-SubCell"/>
</dbReference>
<dbReference type="GO" id="GO:0032511">
    <property type="term" value="P:late endosome to vacuole transport via multivesicular body sorting pathway"/>
    <property type="evidence" value="ECO:0000318"/>
    <property type="project" value="GO_Central"/>
</dbReference>
<dbReference type="GO" id="GO:0060400">
    <property type="term" value="P:negative regulation of growth hormone receptor signaling pathway"/>
    <property type="evidence" value="ECO:0000318"/>
    <property type="project" value="GO_Central"/>
</dbReference>
<dbReference type="InterPro" id="IPR007262">
    <property type="entry name" value="Vps55/LEPROT"/>
</dbReference>
<dbReference type="PANTHER" id="PTHR12050:SF3">
    <property type="entry name" value="LEPTIN RECEPTOR GENE-RELATED PROTEIN"/>
    <property type="match status" value="1"/>
</dbReference>
<dbReference type="PANTHER" id="PTHR12050">
    <property type="entry name" value="LEPTIN RECEPTOR-RELATED"/>
    <property type="match status" value="1"/>
</dbReference>
<dbReference type="Pfam" id="PF04133">
    <property type="entry name" value="Vps55"/>
    <property type="match status" value="1"/>
</dbReference>
<feature type="chain" id="PRO_0000397883" description="Leptin receptor gene-related protein">
    <location>
        <begin position="1"/>
        <end position="130"/>
    </location>
</feature>
<feature type="transmembrane region" description="Helical" evidence="2">
    <location>
        <begin position="7"/>
        <end position="27"/>
    </location>
</feature>
<feature type="transmembrane region" description="Helical" evidence="2">
    <location>
        <begin position="32"/>
        <end position="52"/>
    </location>
</feature>
<feature type="transmembrane region" description="Helical" evidence="2">
    <location>
        <begin position="68"/>
        <end position="88"/>
    </location>
</feature>
<feature type="transmembrane region" description="Helical" evidence="2">
    <location>
        <begin position="99"/>
        <end position="119"/>
    </location>
</feature>
<proteinExistence type="evidence at transcript level"/>
<comment type="function">
    <text evidence="1">Involved in protein trafficking. May be involved in the down-regulation of membrane protein levels (By similarity).</text>
</comment>
<comment type="subcellular location">
    <subcellularLocation>
        <location evidence="1">Golgi apparatus membrane</location>
        <topology evidence="1">Multi-pass membrane protein</topology>
    </subcellularLocation>
    <subcellularLocation>
        <location evidence="1">Endosome membrane</location>
    </subcellularLocation>
</comment>
<comment type="similarity">
    <text evidence="3">Belongs to the OB-RGRP/VPS55 family.</text>
</comment>
<name>OBRG_DANRE</name>